<protein>
    <recommendedName>
        <fullName evidence="1">Integration host factor subunit beta</fullName>
        <shortName evidence="1">IHF-beta</shortName>
    </recommendedName>
</protein>
<feature type="chain" id="PRO_1000122253" description="Integration host factor subunit beta">
    <location>
        <begin position="1"/>
        <end position="94"/>
    </location>
</feature>
<sequence>MTKSELIERLAGQQSHVPAKVVEDAVKEMLEHMAGTLAEGERIEIRGFGSFSLHYRAPRVGRNPKTGDKVELEGKYVPHFKPGKELRDRANIYG</sequence>
<reference key="1">
    <citation type="journal article" date="2010" name="J. Bacteriol.">
        <title>Genome sequence of the deep-rooted Yersinia pestis strain Angola reveals new insights into the evolution and pangenome of the plague bacterium.</title>
        <authorList>
            <person name="Eppinger M."/>
            <person name="Worsham P.L."/>
            <person name="Nikolich M.P."/>
            <person name="Riley D.R."/>
            <person name="Sebastian Y."/>
            <person name="Mou S."/>
            <person name="Achtman M."/>
            <person name="Lindler L.E."/>
            <person name="Ravel J."/>
        </authorList>
    </citation>
    <scope>NUCLEOTIDE SEQUENCE [LARGE SCALE GENOMIC DNA]</scope>
    <source>
        <strain>Angola</strain>
    </source>
</reference>
<comment type="function">
    <text evidence="1">This protein is one of the two subunits of integration host factor, a specific DNA-binding protein that functions in genetic recombination as well as in transcriptional and translational control.</text>
</comment>
<comment type="subunit">
    <text evidence="1">Heterodimer of an alpha and a beta chain.</text>
</comment>
<comment type="similarity">
    <text evidence="1">Belongs to the bacterial histone-like protein family.</text>
</comment>
<proteinExistence type="inferred from homology"/>
<keyword id="KW-0233">DNA recombination</keyword>
<keyword id="KW-0238">DNA-binding</keyword>
<keyword id="KW-0804">Transcription</keyword>
<keyword id="KW-0805">Transcription regulation</keyword>
<keyword id="KW-0810">Translation regulation</keyword>
<dbReference type="EMBL" id="CP000901">
    <property type="protein sequence ID" value="ABX88148.1"/>
    <property type="molecule type" value="Genomic_DNA"/>
</dbReference>
<dbReference type="RefSeq" id="WP_002211322.1">
    <property type="nucleotide sequence ID" value="NZ_CP009935.1"/>
</dbReference>
<dbReference type="SMR" id="A9R7I5"/>
<dbReference type="GeneID" id="96664989"/>
<dbReference type="KEGG" id="ypg:YpAngola_A1956"/>
<dbReference type="PATRIC" id="fig|349746.12.peg.2932"/>
<dbReference type="GO" id="GO:0005694">
    <property type="term" value="C:chromosome"/>
    <property type="evidence" value="ECO:0007669"/>
    <property type="project" value="InterPro"/>
</dbReference>
<dbReference type="GO" id="GO:0005829">
    <property type="term" value="C:cytosol"/>
    <property type="evidence" value="ECO:0007669"/>
    <property type="project" value="TreeGrafter"/>
</dbReference>
<dbReference type="GO" id="GO:0003677">
    <property type="term" value="F:DNA binding"/>
    <property type="evidence" value="ECO:0007669"/>
    <property type="project" value="UniProtKB-UniRule"/>
</dbReference>
<dbReference type="GO" id="GO:0030527">
    <property type="term" value="F:structural constituent of chromatin"/>
    <property type="evidence" value="ECO:0007669"/>
    <property type="project" value="InterPro"/>
</dbReference>
<dbReference type="GO" id="GO:0006310">
    <property type="term" value="P:DNA recombination"/>
    <property type="evidence" value="ECO:0007669"/>
    <property type="project" value="UniProtKB-UniRule"/>
</dbReference>
<dbReference type="GO" id="GO:0006355">
    <property type="term" value="P:regulation of DNA-templated transcription"/>
    <property type="evidence" value="ECO:0007669"/>
    <property type="project" value="UniProtKB-UniRule"/>
</dbReference>
<dbReference type="GO" id="GO:0006417">
    <property type="term" value="P:regulation of translation"/>
    <property type="evidence" value="ECO:0007669"/>
    <property type="project" value="UniProtKB-UniRule"/>
</dbReference>
<dbReference type="CDD" id="cd13836">
    <property type="entry name" value="IHF_B"/>
    <property type="match status" value="1"/>
</dbReference>
<dbReference type="FunFam" id="4.10.520.10:FF:000003">
    <property type="entry name" value="Integration host factor subunit beta"/>
    <property type="match status" value="1"/>
</dbReference>
<dbReference type="Gene3D" id="4.10.520.10">
    <property type="entry name" value="IHF-like DNA-binding proteins"/>
    <property type="match status" value="1"/>
</dbReference>
<dbReference type="HAMAP" id="MF_00381">
    <property type="entry name" value="IHF_beta"/>
    <property type="match status" value="1"/>
</dbReference>
<dbReference type="InterPro" id="IPR000119">
    <property type="entry name" value="Hist_DNA-bd"/>
</dbReference>
<dbReference type="InterPro" id="IPR020816">
    <property type="entry name" value="Histone-like_DNA-bd_CS"/>
</dbReference>
<dbReference type="InterPro" id="IPR010992">
    <property type="entry name" value="IHF-like_DNA-bd_dom_sf"/>
</dbReference>
<dbReference type="InterPro" id="IPR005685">
    <property type="entry name" value="IHF_beta"/>
</dbReference>
<dbReference type="NCBIfam" id="TIGR00988">
    <property type="entry name" value="hip"/>
    <property type="match status" value="1"/>
</dbReference>
<dbReference type="NCBIfam" id="NF001222">
    <property type="entry name" value="PRK00199.1"/>
    <property type="match status" value="1"/>
</dbReference>
<dbReference type="PANTHER" id="PTHR33175">
    <property type="entry name" value="DNA-BINDING PROTEIN HU"/>
    <property type="match status" value="1"/>
</dbReference>
<dbReference type="PANTHER" id="PTHR33175:SF5">
    <property type="entry name" value="INTEGRATION HOST FACTOR SUBUNIT BETA"/>
    <property type="match status" value="1"/>
</dbReference>
<dbReference type="Pfam" id="PF00216">
    <property type="entry name" value="Bac_DNA_binding"/>
    <property type="match status" value="1"/>
</dbReference>
<dbReference type="PRINTS" id="PR01727">
    <property type="entry name" value="DNABINDINGHU"/>
</dbReference>
<dbReference type="SMART" id="SM00411">
    <property type="entry name" value="BHL"/>
    <property type="match status" value="1"/>
</dbReference>
<dbReference type="SUPFAM" id="SSF47729">
    <property type="entry name" value="IHF-like DNA-binding proteins"/>
    <property type="match status" value="1"/>
</dbReference>
<dbReference type="PROSITE" id="PS00045">
    <property type="entry name" value="HISTONE_LIKE"/>
    <property type="match status" value="1"/>
</dbReference>
<accession>A9R7I5</accession>
<evidence type="ECO:0000255" key="1">
    <source>
        <dbReference type="HAMAP-Rule" id="MF_00381"/>
    </source>
</evidence>
<gene>
    <name evidence="1" type="primary">ihfB</name>
    <name evidence="1" type="synonym">himD</name>
    <name type="ordered locus">YpAngola_A1956</name>
</gene>
<organism>
    <name type="scientific">Yersinia pestis bv. Antiqua (strain Angola)</name>
    <dbReference type="NCBI Taxonomy" id="349746"/>
    <lineage>
        <taxon>Bacteria</taxon>
        <taxon>Pseudomonadati</taxon>
        <taxon>Pseudomonadota</taxon>
        <taxon>Gammaproteobacteria</taxon>
        <taxon>Enterobacterales</taxon>
        <taxon>Yersiniaceae</taxon>
        <taxon>Yersinia</taxon>
    </lineage>
</organism>
<name>IHFB_YERPG</name>